<keyword id="KW-0489">Methyltransferase</keyword>
<keyword id="KW-0949">S-adenosyl-L-methionine</keyword>
<keyword id="KW-0808">Transferase</keyword>
<keyword id="KW-0819">tRNA processing</keyword>
<evidence type="ECO:0000250" key="1"/>
<evidence type="ECO:0000255" key="2">
    <source>
        <dbReference type="HAMAP-Rule" id="MF_01057"/>
    </source>
</evidence>
<comment type="function">
    <text evidence="2">Catalyzes the formation of N(7)-methylguanine at position 46 (m7G46) in tRNA.</text>
</comment>
<comment type="catalytic activity">
    <reaction evidence="2">
        <text>guanosine(46) in tRNA + S-adenosyl-L-methionine = N(7)-methylguanosine(46) in tRNA + S-adenosyl-L-homocysteine</text>
        <dbReference type="Rhea" id="RHEA:42708"/>
        <dbReference type="Rhea" id="RHEA-COMP:10188"/>
        <dbReference type="Rhea" id="RHEA-COMP:10189"/>
        <dbReference type="ChEBI" id="CHEBI:57856"/>
        <dbReference type="ChEBI" id="CHEBI:59789"/>
        <dbReference type="ChEBI" id="CHEBI:74269"/>
        <dbReference type="ChEBI" id="CHEBI:74480"/>
        <dbReference type="EC" id="2.1.1.33"/>
    </reaction>
</comment>
<comment type="pathway">
    <text evidence="2">tRNA modification; N(7)-methylguanine-tRNA biosynthesis.</text>
</comment>
<comment type="similarity">
    <text evidence="2">Belongs to the class I-like SAM-binding methyltransferase superfamily. TrmB family.</text>
</comment>
<protein>
    <recommendedName>
        <fullName evidence="2">tRNA (guanine-N(7)-)-methyltransferase</fullName>
        <ecNumber evidence="2">2.1.1.33</ecNumber>
    </recommendedName>
    <alternativeName>
        <fullName evidence="2">tRNA (guanine(46)-N(7))-methyltransferase</fullName>
    </alternativeName>
    <alternativeName>
        <fullName evidence="2">tRNA(m7G46)-methyltransferase</fullName>
    </alternativeName>
</protein>
<sequence>MRVRKRKGAEEHLANNPHYVILNPEDAKGRWHDVFGNDRPIHIEVGSGKGGFITGMALKNPDINYIGIDIQLSVLSYALDKVLASEVPNVKLLRVDGSSLTNYFEDGEVDMMYLNFSDPWPKTKHEKRRLTYKDFLDTYKRILPEHGEIHFKTDNRGLFEYSLASFSQYGMTLRQIWLDLHASNYEGNVMTEYEEKFSNKGQVIYRVEANF</sequence>
<gene>
    <name evidence="2" type="primary">trmB</name>
    <name type="ordered locus">Spy49_1342c</name>
</gene>
<dbReference type="EC" id="2.1.1.33" evidence="2"/>
<dbReference type="EMBL" id="CP000829">
    <property type="protein sequence ID" value="ACI61620.1"/>
    <property type="molecule type" value="Genomic_DNA"/>
</dbReference>
<dbReference type="SMR" id="B5XHV8"/>
<dbReference type="KEGG" id="soz:Spy49_1342c"/>
<dbReference type="HOGENOM" id="CLU_050910_2_1_9"/>
<dbReference type="UniPathway" id="UPA00989"/>
<dbReference type="Proteomes" id="UP000001039">
    <property type="component" value="Chromosome"/>
</dbReference>
<dbReference type="GO" id="GO:0043527">
    <property type="term" value="C:tRNA methyltransferase complex"/>
    <property type="evidence" value="ECO:0007669"/>
    <property type="project" value="TreeGrafter"/>
</dbReference>
<dbReference type="GO" id="GO:0008176">
    <property type="term" value="F:tRNA (guanine(46)-N7)-methyltransferase activity"/>
    <property type="evidence" value="ECO:0007669"/>
    <property type="project" value="UniProtKB-UniRule"/>
</dbReference>
<dbReference type="CDD" id="cd02440">
    <property type="entry name" value="AdoMet_MTases"/>
    <property type="match status" value="1"/>
</dbReference>
<dbReference type="FunFam" id="3.40.50.150:FF:000035">
    <property type="entry name" value="tRNA (guanine-N(7)-)-methyltransferase"/>
    <property type="match status" value="1"/>
</dbReference>
<dbReference type="Gene3D" id="3.40.50.150">
    <property type="entry name" value="Vaccinia Virus protein VP39"/>
    <property type="match status" value="1"/>
</dbReference>
<dbReference type="HAMAP" id="MF_01057">
    <property type="entry name" value="tRNA_methyltr_TrmB"/>
    <property type="match status" value="1"/>
</dbReference>
<dbReference type="InterPro" id="IPR029063">
    <property type="entry name" value="SAM-dependent_MTases_sf"/>
</dbReference>
<dbReference type="InterPro" id="IPR003358">
    <property type="entry name" value="tRNA_(Gua-N-7)_MeTrfase_Trmb"/>
</dbReference>
<dbReference type="InterPro" id="IPR055361">
    <property type="entry name" value="tRNA_methyltr_TrmB_bact"/>
</dbReference>
<dbReference type="NCBIfam" id="NF001080">
    <property type="entry name" value="PRK00121.2-2"/>
    <property type="match status" value="1"/>
</dbReference>
<dbReference type="NCBIfam" id="TIGR00091">
    <property type="entry name" value="tRNA (guanosine(46)-N7)-methyltransferase TrmB"/>
    <property type="match status" value="1"/>
</dbReference>
<dbReference type="PANTHER" id="PTHR23417">
    <property type="entry name" value="3-DEOXY-D-MANNO-OCTULOSONIC-ACID TRANSFERASE/TRNA GUANINE-N 7 - -METHYLTRANSFERASE"/>
    <property type="match status" value="1"/>
</dbReference>
<dbReference type="PANTHER" id="PTHR23417:SF14">
    <property type="entry name" value="PENTACOTRIPEPTIDE-REPEAT REGION OF PRORP DOMAIN-CONTAINING PROTEIN"/>
    <property type="match status" value="1"/>
</dbReference>
<dbReference type="Pfam" id="PF02390">
    <property type="entry name" value="Methyltransf_4"/>
    <property type="match status" value="1"/>
</dbReference>
<dbReference type="SUPFAM" id="SSF53335">
    <property type="entry name" value="S-adenosyl-L-methionine-dependent methyltransferases"/>
    <property type="match status" value="1"/>
</dbReference>
<dbReference type="PROSITE" id="PS51625">
    <property type="entry name" value="SAM_MT_TRMB"/>
    <property type="match status" value="1"/>
</dbReference>
<name>TRMB_STRPZ</name>
<accession>B5XHV8</accession>
<proteinExistence type="inferred from homology"/>
<feature type="chain" id="PRO_1000136372" description="tRNA (guanine-N(7)-)-methyltransferase">
    <location>
        <begin position="1"/>
        <end position="211"/>
    </location>
</feature>
<feature type="region of interest" description="Interaction with RNA" evidence="2">
    <location>
        <begin position="124"/>
        <end position="129"/>
    </location>
</feature>
<feature type="active site" evidence="1">
    <location>
        <position position="118"/>
    </location>
</feature>
<feature type="binding site" evidence="2">
    <location>
        <position position="44"/>
    </location>
    <ligand>
        <name>S-adenosyl-L-methionine</name>
        <dbReference type="ChEBI" id="CHEBI:59789"/>
    </ligand>
</feature>
<feature type="binding site" evidence="2">
    <location>
        <position position="69"/>
    </location>
    <ligand>
        <name>S-adenosyl-L-methionine</name>
        <dbReference type="ChEBI" id="CHEBI:59789"/>
    </ligand>
</feature>
<feature type="binding site" evidence="2">
    <location>
        <position position="96"/>
    </location>
    <ligand>
        <name>S-adenosyl-L-methionine</name>
        <dbReference type="ChEBI" id="CHEBI:59789"/>
    </ligand>
</feature>
<feature type="binding site" evidence="2">
    <location>
        <position position="118"/>
    </location>
    <ligand>
        <name>S-adenosyl-L-methionine</name>
        <dbReference type="ChEBI" id="CHEBI:59789"/>
    </ligand>
</feature>
<feature type="binding site" evidence="2">
    <location>
        <position position="122"/>
    </location>
    <ligand>
        <name>substrate</name>
    </ligand>
</feature>
<feature type="binding site" evidence="2">
    <location>
        <position position="154"/>
    </location>
    <ligand>
        <name>substrate</name>
    </ligand>
</feature>
<feature type="binding site" evidence="2">
    <location>
        <begin position="191"/>
        <end position="194"/>
    </location>
    <ligand>
        <name>substrate</name>
    </ligand>
</feature>
<organism>
    <name type="scientific">Streptococcus pyogenes serotype M49 (strain NZ131)</name>
    <dbReference type="NCBI Taxonomy" id="471876"/>
    <lineage>
        <taxon>Bacteria</taxon>
        <taxon>Bacillati</taxon>
        <taxon>Bacillota</taxon>
        <taxon>Bacilli</taxon>
        <taxon>Lactobacillales</taxon>
        <taxon>Streptococcaceae</taxon>
        <taxon>Streptococcus</taxon>
    </lineage>
</organism>
<reference key="1">
    <citation type="journal article" date="2008" name="J. Bacteriol.">
        <title>Genome sequence of a nephritogenic and highly transformable M49 strain of Streptococcus pyogenes.</title>
        <authorList>
            <person name="McShan W.M."/>
            <person name="Ferretti J.J."/>
            <person name="Karasawa T."/>
            <person name="Suvorov A.N."/>
            <person name="Lin S."/>
            <person name="Qin B."/>
            <person name="Jia H."/>
            <person name="Kenton S."/>
            <person name="Najar F."/>
            <person name="Wu H."/>
            <person name="Scott J."/>
            <person name="Roe B.A."/>
            <person name="Savic D.J."/>
        </authorList>
    </citation>
    <scope>NUCLEOTIDE SEQUENCE [LARGE SCALE GENOMIC DNA]</scope>
    <source>
        <strain>NZ131</strain>
    </source>
</reference>